<keyword id="KW-0067">ATP-binding</keyword>
<keyword id="KW-0347">Helicase</keyword>
<keyword id="KW-0378">Hydrolase</keyword>
<keyword id="KW-0547">Nucleotide-binding</keyword>
<keyword id="KW-0539">Nucleus</keyword>
<keyword id="KW-1185">Reference proteome</keyword>
<keyword id="KW-0690">Ribosome biogenesis</keyword>
<keyword id="KW-0694">RNA-binding</keyword>
<keyword id="KW-0698">rRNA processing</keyword>
<organism>
    <name type="scientific">Lodderomyces elongisporus (strain ATCC 11503 / CBS 2605 / JCM 1781 / NBRC 1676 / NRRL YB-4239)</name>
    <name type="common">Yeast</name>
    <name type="synonym">Saccharomyces elongisporus</name>
    <dbReference type="NCBI Taxonomy" id="379508"/>
    <lineage>
        <taxon>Eukaryota</taxon>
        <taxon>Fungi</taxon>
        <taxon>Dikarya</taxon>
        <taxon>Ascomycota</taxon>
        <taxon>Saccharomycotina</taxon>
        <taxon>Pichiomycetes</taxon>
        <taxon>Debaryomycetaceae</taxon>
        <taxon>Candida/Lodderomyces clade</taxon>
        <taxon>Lodderomyces</taxon>
    </lineage>
</organism>
<name>FAL1_LODEL</name>
<protein>
    <recommendedName>
        <fullName>ATP-dependent RNA helicase FAL1</fullName>
        <ecNumber>3.6.4.13</ecNumber>
    </recommendedName>
</protein>
<dbReference type="EC" id="3.6.4.13"/>
<dbReference type="EMBL" id="CH981525">
    <property type="protein sequence ID" value="EDK43549.1"/>
    <property type="molecule type" value="Genomic_DNA"/>
</dbReference>
<dbReference type="RefSeq" id="XP_001526899.1">
    <property type="nucleotide sequence ID" value="XM_001526849.1"/>
</dbReference>
<dbReference type="SMR" id="A5DWJ1"/>
<dbReference type="FunCoup" id="A5DWJ1">
    <property type="interactions" value="653"/>
</dbReference>
<dbReference type="STRING" id="379508.A5DWJ1"/>
<dbReference type="GeneID" id="5233761"/>
<dbReference type="KEGG" id="lel:PVL30_001700"/>
<dbReference type="VEuPathDB" id="FungiDB:LELG_01727"/>
<dbReference type="eggNOG" id="KOG0328">
    <property type="taxonomic scope" value="Eukaryota"/>
</dbReference>
<dbReference type="HOGENOM" id="CLU_003041_1_0_1"/>
<dbReference type="InParanoid" id="A5DWJ1"/>
<dbReference type="OMA" id="DTIHGDK"/>
<dbReference type="OrthoDB" id="10265785at2759"/>
<dbReference type="Proteomes" id="UP000001996">
    <property type="component" value="Unassembled WGS sequence"/>
</dbReference>
<dbReference type="GO" id="GO:0097078">
    <property type="term" value="C:FAL1-SGD1 complex"/>
    <property type="evidence" value="ECO:0007669"/>
    <property type="project" value="EnsemblFungi"/>
</dbReference>
<dbReference type="GO" id="GO:0005730">
    <property type="term" value="C:nucleolus"/>
    <property type="evidence" value="ECO:0007669"/>
    <property type="project" value="UniProtKB-SubCell"/>
</dbReference>
<dbReference type="GO" id="GO:0030688">
    <property type="term" value="C:preribosome, small subunit precursor"/>
    <property type="evidence" value="ECO:0007669"/>
    <property type="project" value="EnsemblFungi"/>
</dbReference>
<dbReference type="GO" id="GO:0032040">
    <property type="term" value="C:small-subunit processome"/>
    <property type="evidence" value="ECO:0007669"/>
    <property type="project" value="EnsemblFungi"/>
</dbReference>
<dbReference type="GO" id="GO:0005524">
    <property type="term" value="F:ATP binding"/>
    <property type="evidence" value="ECO:0007669"/>
    <property type="project" value="UniProtKB-KW"/>
</dbReference>
<dbReference type="GO" id="GO:0016887">
    <property type="term" value="F:ATP hydrolysis activity"/>
    <property type="evidence" value="ECO:0007669"/>
    <property type="project" value="RHEA"/>
</dbReference>
<dbReference type="GO" id="GO:0003723">
    <property type="term" value="F:RNA binding"/>
    <property type="evidence" value="ECO:0007669"/>
    <property type="project" value="UniProtKB-KW"/>
</dbReference>
<dbReference type="GO" id="GO:0003724">
    <property type="term" value="F:RNA helicase activity"/>
    <property type="evidence" value="ECO:0007669"/>
    <property type="project" value="UniProtKB-EC"/>
</dbReference>
<dbReference type="GO" id="GO:0000462">
    <property type="term" value="P:maturation of SSU-rRNA from tricistronic rRNA transcript (SSU-rRNA, 5.8S rRNA, LSU-rRNA)"/>
    <property type="evidence" value="ECO:0007669"/>
    <property type="project" value="EnsemblFungi"/>
</dbReference>
<dbReference type="CDD" id="cd18787">
    <property type="entry name" value="SF2_C_DEAD"/>
    <property type="match status" value="1"/>
</dbReference>
<dbReference type="FunFam" id="3.40.50.300:FF:000849">
    <property type="entry name" value="ATP-dependent RNA helicase DBP5"/>
    <property type="match status" value="1"/>
</dbReference>
<dbReference type="FunFam" id="3.40.50.300:FF:000031">
    <property type="entry name" value="Eukaryotic initiation factor 4A-III"/>
    <property type="match status" value="1"/>
</dbReference>
<dbReference type="Gene3D" id="3.40.50.300">
    <property type="entry name" value="P-loop containing nucleotide triphosphate hydrolases"/>
    <property type="match status" value="2"/>
</dbReference>
<dbReference type="InterPro" id="IPR011545">
    <property type="entry name" value="DEAD/DEAH_box_helicase_dom"/>
</dbReference>
<dbReference type="InterPro" id="IPR014001">
    <property type="entry name" value="Helicase_ATP-bd"/>
</dbReference>
<dbReference type="InterPro" id="IPR001650">
    <property type="entry name" value="Helicase_C-like"/>
</dbReference>
<dbReference type="InterPro" id="IPR027417">
    <property type="entry name" value="P-loop_NTPase"/>
</dbReference>
<dbReference type="InterPro" id="IPR000629">
    <property type="entry name" value="RNA-helicase_DEAD-box_CS"/>
</dbReference>
<dbReference type="InterPro" id="IPR014014">
    <property type="entry name" value="RNA_helicase_DEAD_Q_motif"/>
</dbReference>
<dbReference type="PANTHER" id="PTHR47958">
    <property type="entry name" value="ATP-DEPENDENT RNA HELICASE DBP3"/>
    <property type="match status" value="1"/>
</dbReference>
<dbReference type="Pfam" id="PF00270">
    <property type="entry name" value="DEAD"/>
    <property type="match status" value="1"/>
</dbReference>
<dbReference type="Pfam" id="PF00271">
    <property type="entry name" value="Helicase_C"/>
    <property type="match status" value="1"/>
</dbReference>
<dbReference type="SMART" id="SM00487">
    <property type="entry name" value="DEXDc"/>
    <property type="match status" value="1"/>
</dbReference>
<dbReference type="SMART" id="SM00490">
    <property type="entry name" value="HELICc"/>
    <property type="match status" value="1"/>
</dbReference>
<dbReference type="SUPFAM" id="SSF52540">
    <property type="entry name" value="P-loop containing nucleoside triphosphate hydrolases"/>
    <property type="match status" value="1"/>
</dbReference>
<dbReference type="PROSITE" id="PS00039">
    <property type="entry name" value="DEAD_ATP_HELICASE"/>
    <property type="match status" value="1"/>
</dbReference>
<dbReference type="PROSITE" id="PS51192">
    <property type="entry name" value="HELICASE_ATP_BIND_1"/>
    <property type="match status" value="1"/>
</dbReference>
<dbReference type="PROSITE" id="PS51194">
    <property type="entry name" value="HELICASE_CTER"/>
    <property type="match status" value="1"/>
</dbReference>
<dbReference type="PROSITE" id="PS51195">
    <property type="entry name" value="Q_MOTIF"/>
    <property type="match status" value="1"/>
</dbReference>
<feature type="chain" id="PRO_0000294608" description="ATP-dependent RNA helicase FAL1">
    <location>
        <begin position="1"/>
        <end position="399"/>
    </location>
</feature>
<feature type="domain" description="Helicase ATP-binding" evidence="2">
    <location>
        <begin position="57"/>
        <end position="227"/>
    </location>
</feature>
<feature type="domain" description="Helicase C-terminal" evidence="3">
    <location>
        <begin position="238"/>
        <end position="399"/>
    </location>
</feature>
<feature type="short sequence motif" description="Q motif">
    <location>
        <begin position="26"/>
        <end position="54"/>
    </location>
</feature>
<feature type="short sequence motif" description="DEAD box">
    <location>
        <begin position="175"/>
        <end position="178"/>
    </location>
</feature>
<feature type="binding site" evidence="2">
    <location>
        <begin position="70"/>
        <end position="77"/>
    </location>
    <ligand>
        <name>ATP</name>
        <dbReference type="ChEBI" id="CHEBI:30616"/>
    </ligand>
</feature>
<proteinExistence type="inferred from homology"/>
<accession>A5DWJ1</accession>
<reference key="1">
    <citation type="journal article" date="2009" name="Nature">
        <title>Evolution of pathogenicity and sexual reproduction in eight Candida genomes.</title>
        <authorList>
            <person name="Butler G."/>
            <person name="Rasmussen M.D."/>
            <person name="Lin M.F."/>
            <person name="Santos M.A.S."/>
            <person name="Sakthikumar S."/>
            <person name="Munro C.A."/>
            <person name="Rheinbay E."/>
            <person name="Grabherr M."/>
            <person name="Forche A."/>
            <person name="Reedy J.L."/>
            <person name="Agrafioti I."/>
            <person name="Arnaud M.B."/>
            <person name="Bates S."/>
            <person name="Brown A.J.P."/>
            <person name="Brunke S."/>
            <person name="Costanzo M.C."/>
            <person name="Fitzpatrick D.A."/>
            <person name="de Groot P.W.J."/>
            <person name="Harris D."/>
            <person name="Hoyer L.L."/>
            <person name="Hube B."/>
            <person name="Klis F.M."/>
            <person name="Kodira C."/>
            <person name="Lennard N."/>
            <person name="Logue M.E."/>
            <person name="Martin R."/>
            <person name="Neiman A.M."/>
            <person name="Nikolaou E."/>
            <person name="Quail M.A."/>
            <person name="Quinn J."/>
            <person name="Santos M.C."/>
            <person name="Schmitzberger F.F."/>
            <person name="Sherlock G."/>
            <person name="Shah P."/>
            <person name="Silverstein K.A.T."/>
            <person name="Skrzypek M.S."/>
            <person name="Soll D."/>
            <person name="Staggs R."/>
            <person name="Stansfield I."/>
            <person name="Stumpf M.P.H."/>
            <person name="Sudbery P.E."/>
            <person name="Srikantha T."/>
            <person name="Zeng Q."/>
            <person name="Berman J."/>
            <person name="Berriman M."/>
            <person name="Heitman J."/>
            <person name="Gow N.A.R."/>
            <person name="Lorenz M.C."/>
            <person name="Birren B.W."/>
            <person name="Kellis M."/>
            <person name="Cuomo C.A."/>
        </authorList>
    </citation>
    <scope>NUCLEOTIDE SEQUENCE [LARGE SCALE GENOMIC DNA]</scope>
    <source>
        <strain>ATCC 11503 / BCRC 21390 / CBS 2605 / JCM 1781 / NBRC 1676 / NRRL YB-4239</strain>
    </source>
</reference>
<gene>
    <name type="primary">FAL1</name>
    <name type="ORF">LELG_01727</name>
</gene>
<sequence length="399" mass="45376">MDEFDRDLDNELEFSHKSTKGVKVHRTFESMRLKPELLKGIYAYGFEAPSAIQSRAIMQIISGRDTIAQAQSGTGKTATFSIGMLEVLDSKSKECQALVLSPTRELATQIQNVIKHLGDYMNIQTYACIGGKNVGTDIKRLQQGQQIVSGTPGRVLDVIKRRNLSTRHIKMLILDEADELFTKGFKEQIYEIYKHLPPGVQVVVVSATLTHEVLEMTGKFTTDPVKILVKREEVSLSGIKQYYIQCEKEDWKFDTLCDLYDNLTITQAVIFCNTKIKVNWLTDQMRKQNFTVVAMHGDMKQEERDAIMNDFRSGNSRVLISTDVWARGIDVQQISLVINYDLPLDKENYIHRIGRSGRFGRKGTAINLLTKSDTIELKALEKYYSTKIKEMPSNVNDVM</sequence>
<comment type="function">
    <text evidence="1">ATP-dependent RNA helicase involved in 40S ribosomal subunit biogenesis. Required for the processing and cleavage of 35S pre-rRNA at sites A0, A1, and A2, leading to mature 18S rRNA (By similarity).</text>
</comment>
<comment type="catalytic activity">
    <reaction>
        <text>ATP + H2O = ADP + phosphate + H(+)</text>
        <dbReference type="Rhea" id="RHEA:13065"/>
        <dbReference type="ChEBI" id="CHEBI:15377"/>
        <dbReference type="ChEBI" id="CHEBI:15378"/>
        <dbReference type="ChEBI" id="CHEBI:30616"/>
        <dbReference type="ChEBI" id="CHEBI:43474"/>
        <dbReference type="ChEBI" id="CHEBI:456216"/>
        <dbReference type="EC" id="3.6.4.13"/>
    </reaction>
</comment>
<comment type="subcellular location">
    <subcellularLocation>
        <location evidence="1">Nucleus</location>
        <location evidence="1">Nucleolus</location>
    </subcellularLocation>
</comment>
<comment type="domain">
    <text>The Q motif is unique to and characteristic of the DEAD box family of RNA helicases and controls ATP binding and hydrolysis.</text>
</comment>
<comment type="similarity">
    <text evidence="4">Belongs to the DEAD box helicase family. DDX48/FAL1 subfamily.</text>
</comment>
<evidence type="ECO:0000250" key="1"/>
<evidence type="ECO:0000255" key="2">
    <source>
        <dbReference type="PROSITE-ProRule" id="PRU00541"/>
    </source>
</evidence>
<evidence type="ECO:0000255" key="3">
    <source>
        <dbReference type="PROSITE-ProRule" id="PRU00542"/>
    </source>
</evidence>
<evidence type="ECO:0000305" key="4"/>